<accession>P81322</accession>
<evidence type="ECO:0000250" key="1">
    <source>
        <dbReference type="UniProtKB" id="Q6LWM4"/>
    </source>
</evidence>
<evidence type="ECO:0000250" key="2">
    <source>
        <dbReference type="UniProtKB" id="Q6M0N7"/>
    </source>
</evidence>
<evidence type="ECO:0000305" key="3"/>
<name>Y83A_METJA</name>
<reference key="1">
    <citation type="journal article" date="1996" name="Science">
        <title>Complete genome sequence of the methanogenic archaeon, Methanococcus jannaschii.</title>
        <authorList>
            <person name="Bult C.J."/>
            <person name="White O."/>
            <person name="Olsen G.J."/>
            <person name="Zhou L."/>
            <person name="Fleischmann R.D."/>
            <person name="Sutton G.G."/>
            <person name="Blake J.A."/>
            <person name="FitzGerald L.M."/>
            <person name="Clayton R.A."/>
            <person name="Gocayne J.D."/>
            <person name="Kerlavage A.R."/>
            <person name="Dougherty B.A."/>
            <person name="Tomb J.-F."/>
            <person name="Adams M.D."/>
            <person name="Reich C.I."/>
            <person name="Overbeek R."/>
            <person name="Kirkness E.F."/>
            <person name="Weinstock K.G."/>
            <person name="Merrick J.M."/>
            <person name="Glodek A."/>
            <person name="Scott J.L."/>
            <person name="Geoghagen N.S.M."/>
            <person name="Weidman J.F."/>
            <person name="Fuhrmann J.L."/>
            <person name="Nguyen D."/>
            <person name="Utterback T.R."/>
            <person name="Kelley J.M."/>
            <person name="Peterson J.D."/>
            <person name="Sadow P.W."/>
            <person name="Hanna M.C."/>
            <person name="Cotton M.D."/>
            <person name="Roberts K.M."/>
            <person name="Hurst M.A."/>
            <person name="Kaine B.P."/>
            <person name="Borodovsky M."/>
            <person name="Klenk H.-P."/>
            <person name="Fraser C.M."/>
            <person name="Smith H.O."/>
            <person name="Woese C.R."/>
            <person name="Venter J.C."/>
        </authorList>
    </citation>
    <scope>NUCLEOTIDE SEQUENCE [LARGE SCALE GENOMIC DNA]</scope>
    <source>
        <strain>ATCC 43067 / DSM 2661 / JAL-1 / JCM 10045 / NBRC 100440</strain>
    </source>
</reference>
<comment type="subcellular location">
    <subcellularLocation>
        <location evidence="1">Secreted</location>
    </subcellularLocation>
    <subcellularLocation>
        <location evidence="1">Cell surface</location>
    </subcellularLocation>
    <subcellularLocation>
        <location evidence="1">Fimbrium</location>
    </subcellularLocation>
</comment>
<comment type="domain">
    <text evidence="2">Contains an amino terminal motif QXSXEXXXL, which is part of a class III signal sequence.</text>
</comment>
<comment type="PTM">
    <text evidence="1">The N-terminus is cleaved by the prepilin peptidase EppA, which recognizes the class III signal sequence.</text>
</comment>
<gene>
    <name type="ordered locus">MJ0832.1</name>
</gene>
<sequence>MLKFRKRGQISLEFSLLFLGVLLAIVIAVGYPGMFGFNKTVSISSMSLAHAAVSKMKQNIELVSSADEGTMKIVYIKCPPGTWGANNNILYFYRDGNIKFNITAKCDINIILNGNKTVSTPKIIIANITKIDETHVIVTLYQ</sequence>
<dbReference type="EMBL" id="L77117">
    <property type="protein sequence ID" value="AAB98840.1"/>
    <property type="molecule type" value="Genomic_DNA"/>
</dbReference>
<dbReference type="RefSeq" id="WP_010870344.1">
    <property type="nucleotide sequence ID" value="NC_000909.1"/>
</dbReference>
<dbReference type="FunCoup" id="P81322">
    <property type="interactions" value="30"/>
</dbReference>
<dbReference type="STRING" id="243232.MJ_0832.1"/>
<dbReference type="PaxDb" id="243232-MJ_0832.1"/>
<dbReference type="EnsemblBacteria" id="AAB98840">
    <property type="protein sequence ID" value="AAB98840"/>
    <property type="gene ID" value="MJ_0832.1"/>
</dbReference>
<dbReference type="GeneID" id="1451716"/>
<dbReference type="KEGG" id="mja:MJ_0832.1"/>
<dbReference type="eggNOG" id="arCOG05053">
    <property type="taxonomic scope" value="Archaea"/>
</dbReference>
<dbReference type="HOGENOM" id="CLU_1912362_0_0_2"/>
<dbReference type="InParanoid" id="P81322"/>
<dbReference type="OrthoDB" id="65948at2157"/>
<dbReference type="Proteomes" id="UP000000805">
    <property type="component" value="Chromosome"/>
</dbReference>
<dbReference type="GO" id="GO:0009986">
    <property type="term" value="C:cell surface"/>
    <property type="evidence" value="ECO:0007669"/>
    <property type="project" value="UniProtKB-SubCell"/>
</dbReference>
<dbReference type="GO" id="GO:0005576">
    <property type="term" value="C:extracellular region"/>
    <property type="evidence" value="ECO:0007669"/>
    <property type="project" value="UniProtKB-SubCell"/>
</dbReference>
<dbReference type="GO" id="GO:0016020">
    <property type="term" value="C:membrane"/>
    <property type="evidence" value="ECO:0007669"/>
    <property type="project" value="UniProtKB-KW"/>
</dbReference>
<dbReference type="InterPro" id="IPR007166">
    <property type="entry name" value="Class3_signal_pept_motif"/>
</dbReference>
<dbReference type="Pfam" id="PF04021">
    <property type="entry name" value="Class_IIIsignal"/>
    <property type="match status" value="1"/>
</dbReference>
<keyword id="KW-0281">Fimbrium</keyword>
<keyword id="KW-1185">Reference proteome</keyword>
<keyword id="KW-0964">Secreted</keyword>
<feature type="propeptide" id="PRO_0000462038" evidence="3">
    <location>
        <begin position="1"/>
        <end position="8"/>
    </location>
</feature>
<feature type="chain" id="PRO_0000218266" description="Probable pilin MJ0832.1">
    <location>
        <begin position="9"/>
        <end position="142"/>
    </location>
</feature>
<feature type="short sequence motif" description="QXSXEXXXL" evidence="3">
    <location>
        <begin position="9"/>
        <end position="17"/>
    </location>
</feature>
<organism>
    <name type="scientific">Methanocaldococcus jannaschii (strain ATCC 43067 / DSM 2661 / JAL-1 / JCM 10045 / NBRC 100440)</name>
    <name type="common">Methanococcus jannaschii</name>
    <dbReference type="NCBI Taxonomy" id="243232"/>
    <lineage>
        <taxon>Archaea</taxon>
        <taxon>Methanobacteriati</taxon>
        <taxon>Methanobacteriota</taxon>
        <taxon>Methanomada group</taxon>
        <taxon>Methanococci</taxon>
        <taxon>Methanococcales</taxon>
        <taxon>Methanocaldococcaceae</taxon>
        <taxon>Methanocaldococcus</taxon>
    </lineage>
</organism>
<proteinExistence type="inferred from homology"/>
<protein>
    <recommendedName>
        <fullName evidence="3">Probable pilin MJ0832.1</fullName>
    </recommendedName>
</protein>